<feature type="chain" id="PRO_0000257560" description="Putative pre-16S rRNA nuclease">
    <location>
        <begin position="1"/>
        <end position="141"/>
    </location>
</feature>
<proteinExistence type="inferred from homology"/>
<gene>
    <name type="ordered locus">Plut_2047</name>
</gene>
<accession>Q3B192</accession>
<dbReference type="EC" id="3.1.-.-" evidence="1"/>
<dbReference type="EMBL" id="CP000096">
    <property type="protein sequence ID" value="ABB24889.1"/>
    <property type="molecule type" value="Genomic_DNA"/>
</dbReference>
<dbReference type="RefSeq" id="WP_011358759.1">
    <property type="nucleotide sequence ID" value="NC_007512.1"/>
</dbReference>
<dbReference type="SMR" id="Q3B192"/>
<dbReference type="STRING" id="319225.Plut_2047"/>
<dbReference type="KEGG" id="plt:Plut_2047"/>
<dbReference type="eggNOG" id="COG0816">
    <property type="taxonomic scope" value="Bacteria"/>
</dbReference>
<dbReference type="HOGENOM" id="CLU_098240_2_1_10"/>
<dbReference type="OrthoDB" id="9796140at2"/>
<dbReference type="Proteomes" id="UP000002709">
    <property type="component" value="Chromosome"/>
</dbReference>
<dbReference type="GO" id="GO:0005829">
    <property type="term" value="C:cytosol"/>
    <property type="evidence" value="ECO:0007669"/>
    <property type="project" value="TreeGrafter"/>
</dbReference>
<dbReference type="GO" id="GO:0004518">
    <property type="term" value="F:nuclease activity"/>
    <property type="evidence" value="ECO:0007669"/>
    <property type="project" value="UniProtKB-KW"/>
</dbReference>
<dbReference type="GO" id="GO:0000967">
    <property type="term" value="P:rRNA 5'-end processing"/>
    <property type="evidence" value="ECO:0007669"/>
    <property type="project" value="UniProtKB-UniRule"/>
</dbReference>
<dbReference type="CDD" id="cd16964">
    <property type="entry name" value="YqgF"/>
    <property type="match status" value="1"/>
</dbReference>
<dbReference type="Gene3D" id="3.30.420.140">
    <property type="entry name" value="YqgF/RNase H-like domain"/>
    <property type="match status" value="1"/>
</dbReference>
<dbReference type="HAMAP" id="MF_00651">
    <property type="entry name" value="Nuclease_YqgF"/>
    <property type="match status" value="1"/>
</dbReference>
<dbReference type="InterPro" id="IPR012337">
    <property type="entry name" value="RNaseH-like_sf"/>
</dbReference>
<dbReference type="InterPro" id="IPR005227">
    <property type="entry name" value="YqgF"/>
</dbReference>
<dbReference type="InterPro" id="IPR006641">
    <property type="entry name" value="YqgF/RNaseH-like_dom"/>
</dbReference>
<dbReference type="InterPro" id="IPR037027">
    <property type="entry name" value="YqgF/RNaseH-like_dom_sf"/>
</dbReference>
<dbReference type="NCBIfam" id="TIGR00250">
    <property type="entry name" value="RNAse_H_YqgF"/>
    <property type="match status" value="1"/>
</dbReference>
<dbReference type="PANTHER" id="PTHR33317">
    <property type="entry name" value="POLYNUCLEOTIDYL TRANSFERASE, RIBONUCLEASE H-LIKE SUPERFAMILY PROTEIN"/>
    <property type="match status" value="1"/>
</dbReference>
<dbReference type="PANTHER" id="PTHR33317:SF4">
    <property type="entry name" value="POLYNUCLEOTIDYL TRANSFERASE, RIBONUCLEASE H-LIKE SUPERFAMILY PROTEIN"/>
    <property type="match status" value="1"/>
</dbReference>
<dbReference type="Pfam" id="PF03652">
    <property type="entry name" value="RuvX"/>
    <property type="match status" value="1"/>
</dbReference>
<dbReference type="SMART" id="SM00732">
    <property type="entry name" value="YqgFc"/>
    <property type="match status" value="1"/>
</dbReference>
<dbReference type="SUPFAM" id="SSF53098">
    <property type="entry name" value="Ribonuclease H-like"/>
    <property type="match status" value="1"/>
</dbReference>
<sequence>MKPKGRIVGIDYGTKRIGLAMTDPLQLFASPVGTFEPGGLHHELRRIMQGDTVDLAVVGSPVCDDGSGNAMTAVVDRFVEELRAAFPDLRVERVDESHSSREASRILAASGKSRKVRREKGRLDSAAACVLLTRFLEENRG</sequence>
<name>YQGF_CHLL3</name>
<reference key="1">
    <citation type="submission" date="2005-08" db="EMBL/GenBank/DDBJ databases">
        <title>Complete sequence of Pelodictyon luteolum DSM 273.</title>
        <authorList>
            <consortium name="US DOE Joint Genome Institute"/>
            <person name="Copeland A."/>
            <person name="Lucas S."/>
            <person name="Lapidus A."/>
            <person name="Barry K."/>
            <person name="Detter J.C."/>
            <person name="Glavina T."/>
            <person name="Hammon N."/>
            <person name="Israni S."/>
            <person name="Pitluck S."/>
            <person name="Bryant D."/>
            <person name="Schmutz J."/>
            <person name="Larimer F."/>
            <person name="Land M."/>
            <person name="Kyrpides N."/>
            <person name="Ivanova N."/>
            <person name="Richardson P."/>
        </authorList>
    </citation>
    <scope>NUCLEOTIDE SEQUENCE [LARGE SCALE GENOMIC DNA]</scope>
    <source>
        <strain>DSM 273 / BCRC 81028 / 2530</strain>
    </source>
</reference>
<organism>
    <name type="scientific">Chlorobium luteolum (strain DSM 273 / BCRC 81028 / 2530)</name>
    <name type="common">Pelodictyon luteolum</name>
    <dbReference type="NCBI Taxonomy" id="319225"/>
    <lineage>
        <taxon>Bacteria</taxon>
        <taxon>Pseudomonadati</taxon>
        <taxon>Chlorobiota</taxon>
        <taxon>Chlorobiia</taxon>
        <taxon>Chlorobiales</taxon>
        <taxon>Chlorobiaceae</taxon>
        <taxon>Chlorobium/Pelodictyon group</taxon>
        <taxon>Pelodictyon</taxon>
    </lineage>
</organism>
<keyword id="KW-0963">Cytoplasm</keyword>
<keyword id="KW-0378">Hydrolase</keyword>
<keyword id="KW-0540">Nuclease</keyword>
<keyword id="KW-1185">Reference proteome</keyword>
<keyword id="KW-0690">Ribosome biogenesis</keyword>
<evidence type="ECO:0000255" key="1">
    <source>
        <dbReference type="HAMAP-Rule" id="MF_00651"/>
    </source>
</evidence>
<comment type="function">
    <text evidence="1">Could be a nuclease involved in processing of the 5'-end of pre-16S rRNA.</text>
</comment>
<comment type="subcellular location">
    <subcellularLocation>
        <location evidence="1">Cytoplasm</location>
    </subcellularLocation>
</comment>
<comment type="similarity">
    <text evidence="1">Belongs to the YqgF nuclease family.</text>
</comment>
<protein>
    <recommendedName>
        <fullName evidence="1">Putative pre-16S rRNA nuclease</fullName>
        <ecNumber evidence="1">3.1.-.-</ecNumber>
    </recommendedName>
</protein>